<reference key="1">
    <citation type="journal article" date="1997" name="Proc. Natl. Acad. Sci. U.S.A.">
        <title>Complete nucleotide sequence of the chloroplast genome from the green alga Chlorella vulgaris: the existence of genes possibly involved in chloroplast division.</title>
        <authorList>
            <person name="Wakasugi T."/>
            <person name="Nagai T."/>
            <person name="Kapoor M."/>
            <person name="Sugita M."/>
            <person name="Ito M."/>
            <person name="Ito S."/>
            <person name="Tsudzuki J."/>
            <person name="Nakashima K."/>
            <person name="Tsudzuki T."/>
            <person name="Suzuki Y."/>
            <person name="Hamada A."/>
            <person name="Ohta T."/>
            <person name="Inamura A."/>
            <person name="Yoshinaga K."/>
            <person name="Sugiura M."/>
        </authorList>
    </citation>
    <scope>NUCLEOTIDE SEQUENCE [LARGE SCALE GENOMIC DNA]</scope>
    <source>
        <strain>IAM C-27 / Tamiya</strain>
    </source>
</reference>
<evidence type="ECO:0000256" key="1">
    <source>
        <dbReference type="SAM" id="MobiDB-lite"/>
    </source>
</evidence>
<feature type="chain" id="PRO_0000217517" description="Uncharacterized 27.9 kDa protein in trnR-minE intergenic region">
    <location>
        <begin position="1"/>
        <end position="249"/>
    </location>
</feature>
<feature type="region of interest" description="Disordered" evidence="1">
    <location>
        <begin position="66"/>
        <end position="142"/>
    </location>
</feature>
<feature type="compositionally biased region" description="Polar residues" evidence="1">
    <location>
        <begin position="66"/>
        <end position="79"/>
    </location>
</feature>
<feature type="compositionally biased region" description="Polar residues" evidence="1">
    <location>
        <begin position="92"/>
        <end position="119"/>
    </location>
</feature>
<protein>
    <recommendedName>
        <fullName>Uncharacterized 27.9 kDa protein in trnR-minE intergenic region</fullName>
    </recommendedName>
    <alternativeName>
        <fullName>ORF249</fullName>
    </alternativeName>
</protein>
<sequence length="249" mass="27944">MNKKESILREFALLCYFFIVYLLLPKNAKHPLADKSFLDPHPVARVSPFGSRPPFLLMVPSTSVPNASLESGQSSTISPRRQKESSIPVLQASGSVSANKTFQSTESSALHQPKSSSSERTGKIITRQRPHSGPTSPRVTPGELLPTLEALKLQEALDFAQLKLKTRQVRYTINLRSQKLLDTICELNDEKRAEVEEQAAYIFTLQKELVETGYEKVSSYNFTYSRLKQKAEELKYASKKEVAQLVNSL</sequence>
<name>YCX9_CHLVU</name>
<accession>O20173</accession>
<organism>
    <name type="scientific">Chlorella vulgaris</name>
    <name type="common">Green alga</name>
    <dbReference type="NCBI Taxonomy" id="3077"/>
    <lineage>
        <taxon>Eukaryota</taxon>
        <taxon>Viridiplantae</taxon>
        <taxon>Chlorophyta</taxon>
        <taxon>core chlorophytes</taxon>
        <taxon>Trebouxiophyceae</taxon>
        <taxon>Chlorellales</taxon>
        <taxon>Chlorellaceae</taxon>
        <taxon>Chlorella clade</taxon>
        <taxon>Chlorella</taxon>
    </lineage>
</organism>
<keyword id="KW-0150">Chloroplast</keyword>
<keyword id="KW-0934">Plastid</keyword>
<comment type="subcellular location">
    <subcellularLocation>
        <location>Plastid</location>
        <location>Chloroplast</location>
    </subcellularLocation>
</comment>
<geneLocation type="chloroplast"/>
<proteinExistence type="predicted"/>
<dbReference type="EMBL" id="AB001684">
    <property type="protein sequence ID" value="BAA57948.1"/>
    <property type="molecule type" value="Genomic_DNA"/>
</dbReference>
<dbReference type="PIR" id="T07300">
    <property type="entry name" value="T07300"/>
</dbReference>
<dbReference type="RefSeq" id="NP_045872.1">
    <property type="nucleotide sequence ID" value="NC_001865.1"/>
</dbReference>
<dbReference type="SMR" id="O20173"/>
<dbReference type="GeneID" id="1457453"/>
<dbReference type="GO" id="GO:0009507">
    <property type="term" value="C:chloroplast"/>
    <property type="evidence" value="ECO:0007669"/>
    <property type="project" value="UniProtKB-SubCell"/>
</dbReference>